<evidence type="ECO:0000256" key="1">
    <source>
        <dbReference type="SAM" id="MobiDB-lite"/>
    </source>
</evidence>
<proteinExistence type="predicted"/>
<accession>P13971</accession>
<gene>
    <name type="primary">sok</name>
</gene>
<organism>
    <name type="scientific">Escherichia coli</name>
    <dbReference type="NCBI Taxonomy" id="562"/>
    <lineage>
        <taxon>Bacteria</taxon>
        <taxon>Pseudomonadati</taxon>
        <taxon>Pseudomonadota</taxon>
        <taxon>Gammaproteobacteria</taxon>
        <taxon>Enterobacterales</taxon>
        <taxon>Enterobacteriaceae</taxon>
        <taxon>Escherichia</taxon>
    </lineage>
</organism>
<geneLocation type="plasmid">
    <name>IncFII R1</name>
</geneLocation>
<keyword id="KW-0614">Plasmid</keyword>
<feature type="chain" id="PRO_0000068440" description="Protein sok">
    <location>
        <begin position="1"/>
        <end position="74"/>
    </location>
</feature>
<feature type="region of interest" description="Disordered" evidence="1">
    <location>
        <begin position="26"/>
        <end position="45"/>
    </location>
</feature>
<name>SOK_ECOLX</name>
<protein>
    <recommendedName>
        <fullName>Protein sok</fullName>
    </recommendedName>
</protein>
<dbReference type="EMBL" id="X05813">
    <property type="protein sequence ID" value="CAA29258.1"/>
    <property type="molecule type" value="Genomic_DNA"/>
</dbReference>
<dbReference type="PIR" id="S00302">
    <property type="entry name" value="S00302"/>
</dbReference>
<dbReference type="RefSeq" id="WP_001311047.1">
    <property type="nucleotide sequence ID" value="NC_025139.1"/>
</dbReference>
<dbReference type="RefSeq" id="YP_006953842.1">
    <property type="nucleotide sequence ID" value="NC_019089.1"/>
</dbReference>
<dbReference type="RefSeq" id="YP_009066470.1">
    <property type="nucleotide sequence ID" value="NC_025106.1"/>
</dbReference>
<sequence length="74" mass="8619">MWTRHRDASWWLMKINLLRGYLLSATQHGNKPPSRHEAESLKRRAHHSPYTCTLTTLTFPENNPLIQTVHGKSV</sequence>
<reference key="1">
    <citation type="journal article" date="1987" name="Mol. Gen. Genet.">
        <title>Genetic analysis of the parB+ locus of plasmid R1.</title>
        <authorList>
            <person name="Rasmussen P.B."/>
            <person name="Gerdes K."/>
            <person name="Molin S."/>
        </authorList>
    </citation>
    <scope>NUCLEOTIDE SEQUENCE [GENOMIC DNA]</scope>
    <source>
        <strain>CSH50</strain>
    </source>
</reference>
<reference key="2">
    <citation type="journal article" date="1990" name="Mol. Microbiol.">
        <title>Mechanism of post-segregational killing by the hok/sok system of plasmid R1: sok antisense RNA regulates formation of a hok mRNA species correlated with killing of plasmid-free cells.</title>
        <authorList>
            <person name="Gerdes K."/>
            <person name="Thisted T."/>
            <person name="Martinussen J."/>
        </authorList>
    </citation>
    <scope>NUCLEOTIDE SEQUENCE [GENOMIC DNA]</scope>
    <scope>SEQUENCE REVISION</scope>
    <source>
        <strain>CSH50</strain>
    </source>
</reference>